<organism>
    <name type="scientific">Kluyveromyces lactis (strain ATCC 8585 / CBS 2359 / DSM 70799 / NBRC 1267 / NRRL Y-1140 / WM37)</name>
    <name type="common">Yeast</name>
    <name type="synonym">Candida sphaerica</name>
    <dbReference type="NCBI Taxonomy" id="284590"/>
    <lineage>
        <taxon>Eukaryota</taxon>
        <taxon>Fungi</taxon>
        <taxon>Dikarya</taxon>
        <taxon>Ascomycota</taxon>
        <taxon>Saccharomycotina</taxon>
        <taxon>Saccharomycetes</taxon>
        <taxon>Saccharomycetales</taxon>
        <taxon>Saccharomycetaceae</taxon>
        <taxon>Kluyveromyces</taxon>
    </lineage>
</organism>
<sequence length="142" mass="15995">MTVEMTDEENIWGSDNEASTGPQESLEVKKLQQIHSKRGYLDGISSAKEENLQAGFDDTFPLGAKYGFQIGEIVGKLRLFTTLYGNADPQVAADLKQAQDELRINRVLSARHFDEELQPLDSLKVLLSKWQARVLDYEGKYS</sequence>
<name>YAE1_KLULA</name>
<gene>
    <name type="primary">YAE1</name>
    <name type="ordered locus">KLLA0B13970g</name>
</gene>
<keyword id="KW-0963">Cytoplasm</keyword>
<keyword id="KW-0539">Nucleus</keyword>
<keyword id="KW-1185">Reference proteome</keyword>
<reference key="1">
    <citation type="journal article" date="2004" name="Nature">
        <title>Genome evolution in yeasts.</title>
        <authorList>
            <person name="Dujon B."/>
            <person name="Sherman D."/>
            <person name="Fischer G."/>
            <person name="Durrens P."/>
            <person name="Casaregola S."/>
            <person name="Lafontaine I."/>
            <person name="de Montigny J."/>
            <person name="Marck C."/>
            <person name="Neuveglise C."/>
            <person name="Talla E."/>
            <person name="Goffard N."/>
            <person name="Frangeul L."/>
            <person name="Aigle M."/>
            <person name="Anthouard V."/>
            <person name="Babour A."/>
            <person name="Barbe V."/>
            <person name="Barnay S."/>
            <person name="Blanchin S."/>
            <person name="Beckerich J.-M."/>
            <person name="Beyne E."/>
            <person name="Bleykasten C."/>
            <person name="Boisrame A."/>
            <person name="Boyer J."/>
            <person name="Cattolico L."/>
            <person name="Confanioleri F."/>
            <person name="de Daruvar A."/>
            <person name="Despons L."/>
            <person name="Fabre E."/>
            <person name="Fairhead C."/>
            <person name="Ferry-Dumazet H."/>
            <person name="Groppi A."/>
            <person name="Hantraye F."/>
            <person name="Hennequin C."/>
            <person name="Jauniaux N."/>
            <person name="Joyet P."/>
            <person name="Kachouri R."/>
            <person name="Kerrest A."/>
            <person name="Koszul R."/>
            <person name="Lemaire M."/>
            <person name="Lesur I."/>
            <person name="Ma L."/>
            <person name="Muller H."/>
            <person name="Nicaud J.-M."/>
            <person name="Nikolski M."/>
            <person name="Oztas S."/>
            <person name="Ozier-Kalogeropoulos O."/>
            <person name="Pellenz S."/>
            <person name="Potier S."/>
            <person name="Richard G.-F."/>
            <person name="Straub M.-L."/>
            <person name="Suleau A."/>
            <person name="Swennen D."/>
            <person name="Tekaia F."/>
            <person name="Wesolowski-Louvel M."/>
            <person name="Westhof E."/>
            <person name="Wirth B."/>
            <person name="Zeniou-Meyer M."/>
            <person name="Zivanovic Y."/>
            <person name="Bolotin-Fukuhara M."/>
            <person name="Thierry A."/>
            <person name="Bouchier C."/>
            <person name="Caudron B."/>
            <person name="Scarpelli C."/>
            <person name="Gaillardin C."/>
            <person name="Weissenbach J."/>
            <person name="Wincker P."/>
            <person name="Souciet J.-L."/>
        </authorList>
    </citation>
    <scope>NUCLEOTIDE SEQUENCE [LARGE SCALE GENOMIC DNA]</scope>
    <source>
        <strain>ATCC 8585 / CBS 2359 / DSM 70799 / NBRC 1267 / NRRL Y-1140 / WM37</strain>
    </source>
</reference>
<protein>
    <recommendedName>
        <fullName>Protein YAE1</fullName>
    </recommendedName>
</protein>
<comment type="function">
    <text evidence="2">The complex LTO1:YAE1 may function as a target specific adapter that probably recruits apo-RPLI1 to the cytosolic iron-sulfur protein assembly (CIA) complex machinery. May be required for biogenesis of the large ribosomal subunit and initiation of translation.</text>
</comment>
<comment type="subunit">
    <text evidence="2">May form a complex with LTO1.</text>
</comment>
<comment type="subcellular location">
    <subcellularLocation>
        <location evidence="1">Cytoplasm</location>
    </subcellularLocation>
    <subcellularLocation>
        <location evidence="1">Nucleus</location>
    </subcellularLocation>
</comment>
<comment type="similarity">
    <text evidence="4">Belongs to the YAE1 family.</text>
</comment>
<dbReference type="EMBL" id="CR382122">
    <property type="protein sequence ID" value="CAH02546.1"/>
    <property type="molecule type" value="Genomic_DNA"/>
</dbReference>
<dbReference type="RefSeq" id="XP_452153.1">
    <property type="nucleotide sequence ID" value="XM_452153.1"/>
</dbReference>
<dbReference type="FunCoup" id="Q6CV86">
    <property type="interactions" value="10"/>
</dbReference>
<dbReference type="STRING" id="284590.Q6CV86"/>
<dbReference type="PaxDb" id="284590-Q6CV86"/>
<dbReference type="KEGG" id="kla:KLLA0_B13970g"/>
<dbReference type="eggNOG" id="KOG4774">
    <property type="taxonomic scope" value="Eukaryota"/>
</dbReference>
<dbReference type="HOGENOM" id="CLU_066684_2_0_1"/>
<dbReference type="InParanoid" id="Q6CV86"/>
<dbReference type="OMA" id="CKNNEAP"/>
<dbReference type="Proteomes" id="UP000000598">
    <property type="component" value="Chromosome B"/>
</dbReference>
<dbReference type="GO" id="GO:0005737">
    <property type="term" value="C:cytoplasm"/>
    <property type="evidence" value="ECO:0007669"/>
    <property type="project" value="UniProtKB-SubCell"/>
</dbReference>
<dbReference type="GO" id="GO:0005634">
    <property type="term" value="C:nucleus"/>
    <property type="evidence" value="ECO:0007669"/>
    <property type="project" value="UniProtKB-SubCell"/>
</dbReference>
<dbReference type="GO" id="GO:0051604">
    <property type="term" value="P:protein maturation"/>
    <property type="evidence" value="ECO:0000250"/>
    <property type="project" value="UniProtKB"/>
</dbReference>
<dbReference type="InterPro" id="IPR019191">
    <property type="entry name" value="Essential_protein_Yae1_N"/>
</dbReference>
<dbReference type="InterPro" id="IPR038881">
    <property type="entry name" value="Yae1-like"/>
</dbReference>
<dbReference type="PANTHER" id="PTHR18829">
    <property type="entry name" value="PROTEIN YAE1 HOMOLOG"/>
    <property type="match status" value="1"/>
</dbReference>
<dbReference type="PANTHER" id="PTHR18829:SF0">
    <property type="entry name" value="PROTEIN YAE1 HOMOLOG"/>
    <property type="match status" value="1"/>
</dbReference>
<dbReference type="Pfam" id="PF09811">
    <property type="entry name" value="Yae1_N"/>
    <property type="match status" value="1"/>
</dbReference>
<accession>Q6CV86</accession>
<feature type="chain" id="PRO_0000324427" description="Protein YAE1">
    <location>
        <begin position="1"/>
        <end position="142"/>
    </location>
</feature>
<feature type="region of interest" description="Disordered" evidence="3">
    <location>
        <begin position="1"/>
        <end position="24"/>
    </location>
</feature>
<feature type="region of interest" description="deca-GX3 motif; required for interaction with LTO1" evidence="1">
    <location>
        <begin position="39"/>
        <end position="79"/>
    </location>
</feature>
<feature type="compositionally biased region" description="Acidic residues" evidence="3">
    <location>
        <begin position="1"/>
        <end position="10"/>
    </location>
</feature>
<proteinExistence type="inferred from homology"/>
<evidence type="ECO:0000250" key="1">
    <source>
        <dbReference type="UniProtKB" id="P47118"/>
    </source>
</evidence>
<evidence type="ECO:0000250" key="2">
    <source>
        <dbReference type="UniProtKB" id="Q9NRH1"/>
    </source>
</evidence>
<evidence type="ECO:0000256" key="3">
    <source>
        <dbReference type="SAM" id="MobiDB-lite"/>
    </source>
</evidence>
<evidence type="ECO:0000305" key="4"/>